<proteinExistence type="inferred from homology"/>
<sequence>MPKMKTKKSAAKRFVVRPGGTVKRGQAFKRHILTKKTTKNKRHLRGATAVHDSDLNSVRAMLPFA</sequence>
<feature type="chain" id="PRO_0000258651" description="Large ribosomal subunit protein bL35">
    <location>
        <begin position="1"/>
        <end position="65"/>
    </location>
</feature>
<organism>
    <name type="scientific">Burkholderia thailandensis (strain ATCC 700388 / DSM 13276 / CCUG 48851 / CIP 106301 / E264)</name>
    <dbReference type="NCBI Taxonomy" id="271848"/>
    <lineage>
        <taxon>Bacteria</taxon>
        <taxon>Pseudomonadati</taxon>
        <taxon>Pseudomonadota</taxon>
        <taxon>Betaproteobacteria</taxon>
        <taxon>Burkholderiales</taxon>
        <taxon>Burkholderiaceae</taxon>
        <taxon>Burkholderia</taxon>
        <taxon>pseudomallei group</taxon>
    </lineage>
</organism>
<name>RL35_BURTA</name>
<evidence type="ECO:0000255" key="1">
    <source>
        <dbReference type="HAMAP-Rule" id="MF_00514"/>
    </source>
</evidence>
<evidence type="ECO:0000305" key="2"/>
<accession>Q2SVE0</accession>
<comment type="similarity">
    <text evidence="1">Belongs to the bacterial ribosomal protein bL35 family.</text>
</comment>
<dbReference type="EMBL" id="CP000086">
    <property type="protein sequence ID" value="ABC39406.1"/>
    <property type="molecule type" value="Genomic_DNA"/>
</dbReference>
<dbReference type="RefSeq" id="WP_004191477.1">
    <property type="nucleotide sequence ID" value="NZ_CP008785.1"/>
</dbReference>
<dbReference type="SMR" id="Q2SVE0"/>
<dbReference type="GeneID" id="98102115"/>
<dbReference type="KEGG" id="bte:BTH_I2593"/>
<dbReference type="HOGENOM" id="CLU_169643_1_0_4"/>
<dbReference type="Proteomes" id="UP000001930">
    <property type="component" value="Chromosome I"/>
</dbReference>
<dbReference type="GO" id="GO:0022625">
    <property type="term" value="C:cytosolic large ribosomal subunit"/>
    <property type="evidence" value="ECO:0007669"/>
    <property type="project" value="TreeGrafter"/>
</dbReference>
<dbReference type="GO" id="GO:0003735">
    <property type="term" value="F:structural constituent of ribosome"/>
    <property type="evidence" value="ECO:0007669"/>
    <property type="project" value="InterPro"/>
</dbReference>
<dbReference type="GO" id="GO:0006412">
    <property type="term" value="P:translation"/>
    <property type="evidence" value="ECO:0007669"/>
    <property type="project" value="UniProtKB-UniRule"/>
</dbReference>
<dbReference type="FunFam" id="4.10.410.60:FF:000001">
    <property type="entry name" value="50S ribosomal protein L35"/>
    <property type="match status" value="1"/>
</dbReference>
<dbReference type="Gene3D" id="4.10.410.60">
    <property type="match status" value="1"/>
</dbReference>
<dbReference type="HAMAP" id="MF_00514">
    <property type="entry name" value="Ribosomal_bL35"/>
    <property type="match status" value="1"/>
</dbReference>
<dbReference type="InterPro" id="IPR001706">
    <property type="entry name" value="Ribosomal_bL35"/>
</dbReference>
<dbReference type="InterPro" id="IPR021137">
    <property type="entry name" value="Ribosomal_bL35-like"/>
</dbReference>
<dbReference type="InterPro" id="IPR018265">
    <property type="entry name" value="Ribosomal_bL35_CS"/>
</dbReference>
<dbReference type="InterPro" id="IPR037229">
    <property type="entry name" value="Ribosomal_bL35_sf"/>
</dbReference>
<dbReference type="NCBIfam" id="TIGR00001">
    <property type="entry name" value="rpmI_bact"/>
    <property type="match status" value="1"/>
</dbReference>
<dbReference type="PANTHER" id="PTHR33343">
    <property type="entry name" value="54S RIBOSOMAL PROTEIN BL35M"/>
    <property type="match status" value="1"/>
</dbReference>
<dbReference type="PANTHER" id="PTHR33343:SF1">
    <property type="entry name" value="LARGE RIBOSOMAL SUBUNIT PROTEIN BL35M"/>
    <property type="match status" value="1"/>
</dbReference>
<dbReference type="Pfam" id="PF01632">
    <property type="entry name" value="Ribosomal_L35p"/>
    <property type="match status" value="1"/>
</dbReference>
<dbReference type="PRINTS" id="PR00064">
    <property type="entry name" value="RIBOSOMALL35"/>
</dbReference>
<dbReference type="SUPFAM" id="SSF143034">
    <property type="entry name" value="L35p-like"/>
    <property type="match status" value="1"/>
</dbReference>
<dbReference type="PROSITE" id="PS00936">
    <property type="entry name" value="RIBOSOMAL_L35"/>
    <property type="match status" value="1"/>
</dbReference>
<gene>
    <name evidence="1" type="primary">rpmI</name>
    <name type="ordered locus">BTH_I2593</name>
</gene>
<protein>
    <recommendedName>
        <fullName evidence="1">Large ribosomal subunit protein bL35</fullName>
    </recommendedName>
    <alternativeName>
        <fullName evidence="2">50S ribosomal protein L35</fullName>
    </alternativeName>
</protein>
<keyword id="KW-0687">Ribonucleoprotein</keyword>
<keyword id="KW-0689">Ribosomal protein</keyword>
<reference key="1">
    <citation type="journal article" date="2005" name="BMC Genomics">
        <title>Bacterial genome adaptation to niches: divergence of the potential virulence genes in three Burkholderia species of different survival strategies.</title>
        <authorList>
            <person name="Kim H.S."/>
            <person name="Schell M.A."/>
            <person name="Yu Y."/>
            <person name="Ulrich R.L."/>
            <person name="Sarria S.H."/>
            <person name="Nierman W.C."/>
            <person name="DeShazer D."/>
        </authorList>
    </citation>
    <scope>NUCLEOTIDE SEQUENCE [LARGE SCALE GENOMIC DNA]</scope>
    <source>
        <strain>ATCC 700388 / DSM 13276 / CCUG 48851 / CIP 106301 / E264</strain>
    </source>
</reference>